<protein>
    <recommendedName>
        <fullName evidence="1">3-dehydroquinate dehydratase</fullName>
        <shortName evidence="1">3-dehydroquinase</shortName>
        <ecNumber evidence="1">4.2.1.10</ecNumber>
    </recommendedName>
    <alternativeName>
        <fullName evidence="1">Type II DHQase</fullName>
    </alternativeName>
</protein>
<feature type="chain" id="PRO_1000097600" description="3-dehydroquinate dehydratase">
    <location>
        <begin position="1"/>
        <end position="145"/>
    </location>
</feature>
<feature type="active site" description="Proton acceptor" evidence="1">
    <location>
        <position position="22"/>
    </location>
</feature>
<feature type="active site" description="Proton donor" evidence="1">
    <location>
        <position position="97"/>
    </location>
</feature>
<feature type="binding site" evidence="1">
    <location>
        <position position="71"/>
    </location>
    <ligand>
        <name>substrate</name>
    </ligand>
</feature>
<feature type="binding site" evidence="1">
    <location>
        <position position="77"/>
    </location>
    <ligand>
        <name>substrate</name>
    </ligand>
</feature>
<feature type="binding site" evidence="1">
    <location>
        <position position="84"/>
    </location>
    <ligand>
        <name>substrate</name>
    </ligand>
</feature>
<feature type="binding site" evidence="1">
    <location>
        <begin position="98"/>
        <end position="99"/>
    </location>
    <ligand>
        <name>substrate</name>
    </ligand>
</feature>
<feature type="binding site" evidence="1">
    <location>
        <position position="108"/>
    </location>
    <ligand>
        <name>substrate</name>
    </ligand>
</feature>
<feature type="site" description="Transition state stabilizer" evidence="1">
    <location>
        <position position="17"/>
    </location>
</feature>
<organism>
    <name type="scientific">Francisella tularensis subsp. mediasiatica (strain FSC147)</name>
    <dbReference type="NCBI Taxonomy" id="441952"/>
    <lineage>
        <taxon>Bacteria</taxon>
        <taxon>Pseudomonadati</taxon>
        <taxon>Pseudomonadota</taxon>
        <taxon>Gammaproteobacteria</taxon>
        <taxon>Thiotrichales</taxon>
        <taxon>Francisellaceae</taxon>
        <taxon>Francisella</taxon>
    </lineage>
</organism>
<evidence type="ECO:0000255" key="1">
    <source>
        <dbReference type="HAMAP-Rule" id="MF_00169"/>
    </source>
</evidence>
<proteinExistence type="inferred from homology"/>
<gene>
    <name evidence="1" type="primary">aroQ</name>
    <name type="ordered locus">FTM_1432</name>
</gene>
<keyword id="KW-0028">Amino-acid biosynthesis</keyword>
<keyword id="KW-0057">Aromatic amino acid biosynthesis</keyword>
<keyword id="KW-0456">Lyase</keyword>
<dbReference type="EC" id="4.2.1.10" evidence="1"/>
<dbReference type="EMBL" id="CP000915">
    <property type="protein sequence ID" value="ACD31263.1"/>
    <property type="molecule type" value="Genomic_DNA"/>
</dbReference>
<dbReference type="SMR" id="B2SDP9"/>
<dbReference type="KEGG" id="ftm:FTM_1432"/>
<dbReference type="HOGENOM" id="CLU_090968_1_0_6"/>
<dbReference type="UniPathway" id="UPA00053">
    <property type="reaction ID" value="UER00086"/>
</dbReference>
<dbReference type="GO" id="GO:0003855">
    <property type="term" value="F:3-dehydroquinate dehydratase activity"/>
    <property type="evidence" value="ECO:0007669"/>
    <property type="project" value="UniProtKB-UniRule"/>
</dbReference>
<dbReference type="GO" id="GO:0008652">
    <property type="term" value="P:amino acid biosynthetic process"/>
    <property type="evidence" value="ECO:0007669"/>
    <property type="project" value="UniProtKB-KW"/>
</dbReference>
<dbReference type="GO" id="GO:0009073">
    <property type="term" value="P:aromatic amino acid family biosynthetic process"/>
    <property type="evidence" value="ECO:0007669"/>
    <property type="project" value="UniProtKB-KW"/>
</dbReference>
<dbReference type="GO" id="GO:0009423">
    <property type="term" value="P:chorismate biosynthetic process"/>
    <property type="evidence" value="ECO:0007669"/>
    <property type="project" value="UniProtKB-UniRule"/>
</dbReference>
<dbReference type="GO" id="GO:0019631">
    <property type="term" value="P:quinate catabolic process"/>
    <property type="evidence" value="ECO:0007669"/>
    <property type="project" value="TreeGrafter"/>
</dbReference>
<dbReference type="CDD" id="cd00466">
    <property type="entry name" value="DHQase_II"/>
    <property type="match status" value="1"/>
</dbReference>
<dbReference type="Gene3D" id="3.40.50.9100">
    <property type="entry name" value="Dehydroquinase, class II"/>
    <property type="match status" value="1"/>
</dbReference>
<dbReference type="HAMAP" id="MF_00169">
    <property type="entry name" value="AroQ"/>
    <property type="match status" value="1"/>
</dbReference>
<dbReference type="InterPro" id="IPR001874">
    <property type="entry name" value="DHquinase_II"/>
</dbReference>
<dbReference type="InterPro" id="IPR018509">
    <property type="entry name" value="DHquinase_II_CS"/>
</dbReference>
<dbReference type="InterPro" id="IPR036441">
    <property type="entry name" value="DHquinase_II_sf"/>
</dbReference>
<dbReference type="NCBIfam" id="TIGR01088">
    <property type="entry name" value="aroQ"/>
    <property type="match status" value="1"/>
</dbReference>
<dbReference type="NCBIfam" id="NF003804">
    <property type="entry name" value="PRK05395.1-1"/>
    <property type="match status" value="1"/>
</dbReference>
<dbReference type="NCBIfam" id="NF003805">
    <property type="entry name" value="PRK05395.1-2"/>
    <property type="match status" value="1"/>
</dbReference>
<dbReference type="NCBIfam" id="NF003806">
    <property type="entry name" value="PRK05395.1-3"/>
    <property type="match status" value="1"/>
</dbReference>
<dbReference type="NCBIfam" id="NF003807">
    <property type="entry name" value="PRK05395.1-4"/>
    <property type="match status" value="1"/>
</dbReference>
<dbReference type="PANTHER" id="PTHR21272">
    <property type="entry name" value="CATABOLIC 3-DEHYDROQUINASE"/>
    <property type="match status" value="1"/>
</dbReference>
<dbReference type="PANTHER" id="PTHR21272:SF3">
    <property type="entry name" value="CATABOLIC 3-DEHYDROQUINASE"/>
    <property type="match status" value="1"/>
</dbReference>
<dbReference type="Pfam" id="PF01220">
    <property type="entry name" value="DHquinase_II"/>
    <property type="match status" value="1"/>
</dbReference>
<dbReference type="PIRSF" id="PIRSF001399">
    <property type="entry name" value="DHquinase_II"/>
    <property type="match status" value="1"/>
</dbReference>
<dbReference type="SUPFAM" id="SSF52304">
    <property type="entry name" value="Type II 3-dehydroquinate dehydratase"/>
    <property type="match status" value="1"/>
</dbReference>
<dbReference type="PROSITE" id="PS01029">
    <property type="entry name" value="DEHYDROQUINASE_II"/>
    <property type="match status" value="1"/>
</dbReference>
<accession>B2SDP9</accession>
<sequence length="145" mass="16358">MDVLVINGPNLNLLGTRQPRFYGHKTLADINNDLLKIAKENNINIDFYQSNHEGQIIDKIQQTAAKIIIINPAAFTHTSVAIRDAFLAINKPFIEIHLSNIYNREEFRTKSFLSDIAYGCIFGFGPNGYTLALIEAINYINMKGE</sequence>
<name>AROQ_FRATM</name>
<comment type="function">
    <text evidence="1">Catalyzes a trans-dehydration via an enolate intermediate.</text>
</comment>
<comment type="catalytic activity">
    <reaction evidence="1">
        <text>3-dehydroquinate = 3-dehydroshikimate + H2O</text>
        <dbReference type="Rhea" id="RHEA:21096"/>
        <dbReference type="ChEBI" id="CHEBI:15377"/>
        <dbReference type="ChEBI" id="CHEBI:16630"/>
        <dbReference type="ChEBI" id="CHEBI:32364"/>
        <dbReference type="EC" id="4.2.1.10"/>
    </reaction>
</comment>
<comment type="pathway">
    <text evidence="1">Metabolic intermediate biosynthesis; chorismate biosynthesis; chorismate from D-erythrose 4-phosphate and phosphoenolpyruvate: step 3/7.</text>
</comment>
<comment type="subunit">
    <text evidence="1">Homododecamer.</text>
</comment>
<comment type="similarity">
    <text evidence="1">Belongs to the type-II 3-dehydroquinase family.</text>
</comment>
<reference key="1">
    <citation type="journal article" date="2009" name="PLoS Pathog.">
        <title>Molecular evolutionary consequences of niche restriction in Francisella tularensis, a facultative intracellular pathogen.</title>
        <authorList>
            <person name="Larsson P."/>
            <person name="Elfsmark D."/>
            <person name="Svensson K."/>
            <person name="Wikstroem P."/>
            <person name="Forsman M."/>
            <person name="Brettin T."/>
            <person name="Keim P."/>
            <person name="Johansson A."/>
        </authorList>
    </citation>
    <scope>NUCLEOTIDE SEQUENCE [LARGE SCALE GENOMIC DNA]</scope>
    <source>
        <strain>FSC147</strain>
    </source>
</reference>